<name>KAD_RICAE</name>
<sequence length="212" mass="24465">MIVIFLGPPGAGKGTQGKKIAKKINLPHIAIGDIFRTIIKTSTSEAELINNYVKQGELIPNEIVNQVIKNFLLSSEYKNGYILDGYPRNLEQAKFFESFIKEKIKIIYFDVSDELLIKRILGRYSCKNCGKIYNRYFLQPKTDNVCDVCGSSTFDYRKDDNEEVIKKRIEVYKTETYPLIDYYKNSGNFYIVNGSKSEQEIEIDIQKILKIN</sequence>
<dbReference type="EC" id="2.7.4.3" evidence="1"/>
<dbReference type="EMBL" id="CP001612">
    <property type="protein sequence ID" value="ACP53746.1"/>
    <property type="molecule type" value="Genomic_DNA"/>
</dbReference>
<dbReference type="RefSeq" id="WP_012719914.1">
    <property type="nucleotide sequence ID" value="NC_012633.1"/>
</dbReference>
<dbReference type="SMR" id="C3PP86"/>
<dbReference type="KEGG" id="raf:RAF_ORF0891"/>
<dbReference type="HOGENOM" id="CLU_032354_1_2_5"/>
<dbReference type="UniPathway" id="UPA00588">
    <property type="reaction ID" value="UER00649"/>
</dbReference>
<dbReference type="Proteomes" id="UP000002305">
    <property type="component" value="Chromosome"/>
</dbReference>
<dbReference type="GO" id="GO:0005737">
    <property type="term" value="C:cytoplasm"/>
    <property type="evidence" value="ECO:0007669"/>
    <property type="project" value="UniProtKB-SubCell"/>
</dbReference>
<dbReference type="GO" id="GO:0004017">
    <property type="term" value="F:adenylate kinase activity"/>
    <property type="evidence" value="ECO:0007669"/>
    <property type="project" value="UniProtKB-UniRule"/>
</dbReference>
<dbReference type="GO" id="GO:0005524">
    <property type="term" value="F:ATP binding"/>
    <property type="evidence" value="ECO:0007669"/>
    <property type="project" value="UniProtKB-UniRule"/>
</dbReference>
<dbReference type="GO" id="GO:0008270">
    <property type="term" value="F:zinc ion binding"/>
    <property type="evidence" value="ECO:0007669"/>
    <property type="project" value="UniProtKB-UniRule"/>
</dbReference>
<dbReference type="GO" id="GO:0044209">
    <property type="term" value="P:AMP salvage"/>
    <property type="evidence" value="ECO:0007669"/>
    <property type="project" value="UniProtKB-UniRule"/>
</dbReference>
<dbReference type="CDD" id="cd01428">
    <property type="entry name" value="ADK"/>
    <property type="match status" value="1"/>
</dbReference>
<dbReference type="Gene3D" id="3.40.50.300">
    <property type="entry name" value="P-loop containing nucleotide triphosphate hydrolases"/>
    <property type="match status" value="1"/>
</dbReference>
<dbReference type="HAMAP" id="MF_00235">
    <property type="entry name" value="Adenylate_kinase_Adk"/>
    <property type="match status" value="1"/>
</dbReference>
<dbReference type="InterPro" id="IPR006259">
    <property type="entry name" value="Adenyl_kin_sub"/>
</dbReference>
<dbReference type="InterPro" id="IPR000850">
    <property type="entry name" value="Adenylat/UMP-CMP_kin"/>
</dbReference>
<dbReference type="InterPro" id="IPR033690">
    <property type="entry name" value="Adenylat_kinase_CS"/>
</dbReference>
<dbReference type="InterPro" id="IPR007862">
    <property type="entry name" value="Adenylate_kinase_lid-dom"/>
</dbReference>
<dbReference type="InterPro" id="IPR027417">
    <property type="entry name" value="P-loop_NTPase"/>
</dbReference>
<dbReference type="NCBIfam" id="TIGR01351">
    <property type="entry name" value="adk"/>
    <property type="match status" value="1"/>
</dbReference>
<dbReference type="NCBIfam" id="NF001383">
    <property type="entry name" value="PRK00279.2-1"/>
    <property type="match status" value="1"/>
</dbReference>
<dbReference type="PANTHER" id="PTHR23359">
    <property type="entry name" value="NUCLEOTIDE KINASE"/>
    <property type="match status" value="1"/>
</dbReference>
<dbReference type="Pfam" id="PF00406">
    <property type="entry name" value="ADK"/>
    <property type="match status" value="1"/>
</dbReference>
<dbReference type="Pfam" id="PF05191">
    <property type="entry name" value="ADK_lid"/>
    <property type="match status" value="1"/>
</dbReference>
<dbReference type="PRINTS" id="PR00094">
    <property type="entry name" value="ADENYLTKNASE"/>
</dbReference>
<dbReference type="SUPFAM" id="SSF52540">
    <property type="entry name" value="P-loop containing nucleoside triphosphate hydrolases"/>
    <property type="match status" value="1"/>
</dbReference>
<dbReference type="PROSITE" id="PS00113">
    <property type="entry name" value="ADENYLATE_KINASE"/>
    <property type="match status" value="1"/>
</dbReference>
<gene>
    <name evidence="1" type="primary">adk</name>
    <name type="ordered locus">RAF_ORF0891</name>
</gene>
<proteinExistence type="inferred from homology"/>
<comment type="function">
    <text evidence="1">Catalyzes the reversible transfer of the terminal phosphate group between ATP and AMP. Plays an important role in cellular energy homeostasis and in adenine nucleotide metabolism.</text>
</comment>
<comment type="catalytic activity">
    <reaction evidence="1">
        <text>AMP + ATP = 2 ADP</text>
        <dbReference type="Rhea" id="RHEA:12973"/>
        <dbReference type="ChEBI" id="CHEBI:30616"/>
        <dbReference type="ChEBI" id="CHEBI:456215"/>
        <dbReference type="ChEBI" id="CHEBI:456216"/>
        <dbReference type="EC" id="2.7.4.3"/>
    </reaction>
</comment>
<comment type="pathway">
    <text evidence="1">Purine metabolism; AMP biosynthesis via salvage pathway; AMP from ADP: step 1/1.</text>
</comment>
<comment type="subunit">
    <text evidence="1">Monomer.</text>
</comment>
<comment type="subcellular location">
    <subcellularLocation>
        <location evidence="1">Cytoplasm</location>
    </subcellularLocation>
</comment>
<comment type="domain">
    <text evidence="1">Consists of three domains, a large central CORE domain and two small peripheral domains, NMPbind and LID, which undergo movements during catalysis. The LID domain closes over the site of phosphoryl transfer upon ATP binding. Assembling and dissambling the active center during each catalytic cycle provides an effective means to prevent ATP hydrolysis. Some bacteria have evolved a zinc-coordinating structure that stabilizes the LID domain.</text>
</comment>
<comment type="similarity">
    <text evidence="1">Belongs to the adenylate kinase family.</text>
</comment>
<keyword id="KW-0067">ATP-binding</keyword>
<keyword id="KW-0963">Cytoplasm</keyword>
<keyword id="KW-0418">Kinase</keyword>
<keyword id="KW-0479">Metal-binding</keyword>
<keyword id="KW-0545">Nucleotide biosynthesis</keyword>
<keyword id="KW-0547">Nucleotide-binding</keyword>
<keyword id="KW-0808">Transferase</keyword>
<keyword id="KW-0862">Zinc</keyword>
<protein>
    <recommendedName>
        <fullName evidence="1">Adenylate kinase</fullName>
        <shortName evidence="1">AK</shortName>
        <ecNumber evidence="1">2.7.4.3</ecNumber>
    </recommendedName>
    <alternativeName>
        <fullName evidence="1">ATP-AMP transphosphorylase</fullName>
    </alternativeName>
    <alternativeName>
        <fullName evidence="1">ATP:AMP phosphotransferase</fullName>
    </alternativeName>
    <alternativeName>
        <fullName evidence="1">Adenylate monophosphate kinase</fullName>
    </alternativeName>
</protein>
<feature type="chain" id="PRO_1000204425" description="Adenylate kinase">
    <location>
        <begin position="1"/>
        <end position="212"/>
    </location>
</feature>
<feature type="region of interest" description="NMP" evidence="1">
    <location>
        <begin position="30"/>
        <end position="59"/>
    </location>
</feature>
<feature type="region of interest" description="LID" evidence="1">
    <location>
        <begin position="122"/>
        <end position="160"/>
    </location>
</feature>
<feature type="binding site" evidence="1">
    <location>
        <begin position="10"/>
        <end position="15"/>
    </location>
    <ligand>
        <name>ATP</name>
        <dbReference type="ChEBI" id="CHEBI:30616"/>
    </ligand>
</feature>
<feature type="binding site" evidence="1">
    <location>
        <position position="36"/>
    </location>
    <ligand>
        <name>AMP</name>
        <dbReference type="ChEBI" id="CHEBI:456215"/>
    </ligand>
</feature>
<feature type="binding site" evidence="1">
    <location>
        <begin position="57"/>
        <end position="59"/>
    </location>
    <ligand>
        <name>AMP</name>
        <dbReference type="ChEBI" id="CHEBI:456215"/>
    </ligand>
</feature>
<feature type="binding site" evidence="1">
    <location>
        <begin position="85"/>
        <end position="88"/>
    </location>
    <ligand>
        <name>AMP</name>
        <dbReference type="ChEBI" id="CHEBI:456215"/>
    </ligand>
</feature>
<feature type="binding site" evidence="1">
    <location>
        <position position="92"/>
    </location>
    <ligand>
        <name>AMP</name>
        <dbReference type="ChEBI" id="CHEBI:456215"/>
    </ligand>
</feature>
<feature type="binding site" evidence="1">
    <location>
        <position position="123"/>
    </location>
    <ligand>
        <name>ATP</name>
        <dbReference type="ChEBI" id="CHEBI:30616"/>
    </ligand>
</feature>
<feature type="binding site" evidence="1">
    <location>
        <position position="126"/>
    </location>
    <ligand>
        <name>Zn(2+)</name>
        <dbReference type="ChEBI" id="CHEBI:29105"/>
        <note>structural</note>
    </ligand>
</feature>
<feature type="binding site" evidence="1">
    <location>
        <position position="129"/>
    </location>
    <ligand>
        <name>Zn(2+)</name>
        <dbReference type="ChEBI" id="CHEBI:29105"/>
        <note>structural</note>
    </ligand>
</feature>
<feature type="binding site" evidence="1">
    <location>
        <begin position="132"/>
        <end position="133"/>
    </location>
    <ligand>
        <name>ATP</name>
        <dbReference type="ChEBI" id="CHEBI:30616"/>
    </ligand>
</feature>
<feature type="binding site" evidence="1">
    <location>
        <position position="146"/>
    </location>
    <ligand>
        <name>Zn(2+)</name>
        <dbReference type="ChEBI" id="CHEBI:29105"/>
        <note>structural</note>
    </ligand>
</feature>
<feature type="binding site" evidence="1">
    <location>
        <position position="149"/>
    </location>
    <ligand>
        <name>Zn(2+)</name>
        <dbReference type="ChEBI" id="CHEBI:29105"/>
        <note>structural</note>
    </ligand>
</feature>
<feature type="binding site" evidence="1">
    <location>
        <position position="157"/>
    </location>
    <ligand>
        <name>AMP</name>
        <dbReference type="ChEBI" id="CHEBI:456215"/>
    </ligand>
</feature>
<feature type="binding site" evidence="1">
    <location>
        <position position="168"/>
    </location>
    <ligand>
        <name>AMP</name>
        <dbReference type="ChEBI" id="CHEBI:456215"/>
    </ligand>
</feature>
<feature type="binding site" evidence="1">
    <location>
        <position position="196"/>
    </location>
    <ligand>
        <name>ATP</name>
        <dbReference type="ChEBI" id="CHEBI:30616"/>
    </ligand>
</feature>
<evidence type="ECO:0000255" key="1">
    <source>
        <dbReference type="HAMAP-Rule" id="MF_00235"/>
    </source>
</evidence>
<accession>C3PP86</accession>
<reference key="1">
    <citation type="journal article" date="2009" name="BMC Genomics">
        <title>Analysis of the Rickettsia africae genome reveals that virulence acquisition in Rickettsia species may be explained by genome reduction.</title>
        <authorList>
            <person name="Fournier P.-E."/>
            <person name="El Karkouri K."/>
            <person name="Leroy Q."/>
            <person name="Robert C."/>
            <person name="Giumelli B."/>
            <person name="Renesto P."/>
            <person name="Socolovschi C."/>
            <person name="Parola P."/>
            <person name="Audic S."/>
            <person name="Raoult D."/>
        </authorList>
    </citation>
    <scope>NUCLEOTIDE SEQUENCE [LARGE SCALE GENOMIC DNA]</scope>
    <source>
        <strain>ESF-5</strain>
    </source>
</reference>
<organism>
    <name type="scientific">Rickettsia africae (strain ESF-5)</name>
    <dbReference type="NCBI Taxonomy" id="347255"/>
    <lineage>
        <taxon>Bacteria</taxon>
        <taxon>Pseudomonadati</taxon>
        <taxon>Pseudomonadota</taxon>
        <taxon>Alphaproteobacteria</taxon>
        <taxon>Rickettsiales</taxon>
        <taxon>Rickettsiaceae</taxon>
        <taxon>Rickettsieae</taxon>
        <taxon>Rickettsia</taxon>
        <taxon>spotted fever group</taxon>
    </lineage>
</organism>